<dbReference type="EC" id="2.4.1.227" evidence="1"/>
<dbReference type="EMBL" id="CP001349">
    <property type="protein sequence ID" value="ACL62180.1"/>
    <property type="molecule type" value="Genomic_DNA"/>
</dbReference>
<dbReference type="RefSeq" id="WP_015933738.1">
    <property type="nucleotide sequence ID" value="NC_011894.1"/>
</dbReference>
<dbReference type="SMR" id="B8IN64"/>
<dbReference type="STRING" id="460265.Mnod_7443"/>
<dbReference type="CAZy" id="GT28">
    <property type="family name" value="Glycosyltransferase Family 28"/>
</dbReference>
<dbReference type="KEGG" id="mno:Mnod_7443"/>
<dbReference type="eggNOG" id="COG0707">
    <property type="taxonomic scope" value="Bacteria"/>
</dbReference>
<dbReference type="HOGENOM" id="CLU_037404_2_1_5"/>
<dbReference type="OrthoDB" id="9808936at2"/>
<dbReference type="UniPathway" id="UPA00219"/>
<dbReference type="Proteomes" id="UP000008207">
    <property type="component" value="Chromosome"/>
</dbReference>
<dbReference type="GO" id="GO:0005886">
    <property type="term" value="C:plasma membrane"/>
    <property type="evidence" value="ECO:0007669"/>
    <property type="project" value="UniProtKB-SubCell"/>
</dbReference>
<dbReference type="GO" id="GO:0051991">
    <property type="term" value="F:UDP-N-acetyl-D-glucosamine:N-acetylmuramoyl-L-alanyl-D-glutamyl-meso-2,6-diaminopimelyl-D-alanyl-D-alanine-diphosphoundecaprenol 4-beta-N-acetylglucosaminlytransferase activity"/>
    <property type="evidence" value="ECO:0007669"/>
    <property type="project" value="RHEA"/>
</dbReference>
<dbReference type="GO" id="GO:0050511">
    <property type="term" value="F:undecaprenyldiphospho-muramoylpentapeptide beta-N-acetylglucosaminyltransferase activity"/>
    <property type="evidence" value="ECO:0007669"/>
    <property type="project" value="UniProtKB-UniRule"/>
</dbReference>
<dbReference type="GO" id="GO:0005975">
    <property type="term" value="P:carbohydrate metabolic process"/>
    <property type="evidence" value="ECO:0007669"/>
    <property type="project" value="InterPro"/>
</dbReference>
<dbReference type="GO" id="GO:0051301">
    <property type="term" value="P:cell division"/>
    <property type="evidence" value="ECO:0007669"/>
    <property type="project" value="UniProtKB-KW"/>
</dbReference>
<dbReference type="GO" id="GO:0071555">
    <property type="term" value="P:cell wall organization"/>
    <property type="evidence" value="ECO:0007669"/>
    <property type="project" value="UniProtKB-KW"/>
</dbReference>
<dbReference type="GO" id="GO:0030259">
    <property type="term" value="P:lipid glycosylation"/>
    <property type="evidence" value="ECO:0007669"/>
    <property type="project" value="UniProtKB-UniRule"/>
</dbReference>
<dbReference type="GO" id="GO:0009252">
    <property type="term" value="P:peptidoglycan biosynthetic process"/>
    <property type="evidence" value="ECO:0007669"/>
    <property type="project" value="UniProtKB-UniRule"/>
</dbReference>
<dbReference type="GO" id="GO:0008360">
    <property type="term" value="P:regulation of cell shape"/>
    <property type="evidence" value="ECO:0007669"/>
    <property type="project" value="UniProtKB-KW"/>
</dbReference>
<dbReference type="CDD" id="cd03785">
    <property type="entry name" value="GT28_MurG"/>
    <property type="match status" value="1"/>
</dbReference>
<dbReference type="Gene3D" id="3.40.50.2000">
    <property type="entry name" value="Glycogen Phosphorylase B"/>
    <property type="match status" value="2"/>
</dbReference>
<dbReference type="HAMAP" id="MF_00033">
    <property type="entry name" value="MurG"/>
    <property type="match status" value="1"/>
</dbReference>
<dbReference type="InterPro" id="IPR006009">
    <property type="entry name" value="GlcNAc_MurG"/>
</dbReference>
<dbReference type="InterPro" id="IPR007235">
    <property type="entry name" value="Glyco_trans_28_C"/>
</dbReference>
<dbReference type="InterPro" id="IPR004276">
    <property type="entry name" value="GlycoTrans_28_N"/>
</dbReference>
<dbReference type="PANTHER" id="PTHR21015:SF22">
    <property type="entry name" value="GLYCOSYLTRANSFERASE"/>
    <property type="match status" value="1"/>
</dbReference>
<dbReference type="PANTHER" id="PTHR21015">
    <property type="entry name" value="UDP-N-ACETYLGLUCOSAMINE--N-ACETYLMURAMYL-(PENTAPEPTIDE) PYROPHOSPHORYL-UNDECAPRENOL N-ACETYLGLUCOSAMINE TRANSFERASE 1"/>
    <property type="match status" value="1"/>
</dbReference>
<dbReference type="Pfam" id="PF04101">
    <property type="entry name" value="Glyco_tran_28_C"/>
    <property type="match status" value="1"/>
</dbReference>
<dbReference type="Pfam" id="PF03033">
    <property type="entry name" value="Glyco_transf_28"/>
    <property type="match status" value="1"/>
</dbReference>
<dbReference type="SUPFAM" id="SSF53756">
    <property type="entry name" value="UDP-Glycosyltransferase/glycogen phosphorylase"/>
    <property type="match status" value="1"/>
</dbReference>
<sequence length="373" mass="38026">MTVAQPLVLLAAGGTGGHLFPAEALALRLRERGIRVVLATDSRVETLSGEFPASEIVSIPSATPSGRSPLARGAALVTLGRGFAAALRVVRRLNPAVAVGFGGYPTVPPLLAAQMLRVPTLLHEQNAVMGRANAFLARGATVIATGVAQQVRGVPERARARRVHTGNPVRPAVLAAAATPYPPLAVEGPLQLLAFGGSQGARVMSEVVPEAVARLPAALRARLTVVQQARAEDLARAEALYGQAGLAAFSVAPFFKDLPARMAAAHLVVARSGASTVAELAVIGRPAILVPLPGSLDQDQAANAAVLGAAGAAFPRPQTDFTPERLAADLTGLFGAPERLIAAAAAAKGAGIPDAAERLAALVVETAIQASTR</sequence>
<gene>
    <name evidence="1" type="primary">murG</name>
    <name type="ordered locus">Mnod_7443</name>
</gene>
<keyword id="KW-0131">Cell cycle</keyword>
<keyword id="KW-0132">Cell division</keyword>
<keyword id="KW-0997">Cell inner membrane</keyword>
<keyword id="KW-1003">Cell membrane</keyword>
<keyword id="KW-0133">Cell shape</keyword>
<keyword id="KW-0961">Cell wall biogenesis/degradation</keyword>
<keyword id="KW-0328">Glycosyltransferase</keyword>
<keyword id="KW-0472">Membrane</keyword>
<keyword id="KW-0573">Peptidoglycan synthesis</keyword>
<keyword id="KW-1185">Reference proteome</keyword>
<keyword id="KW-0808">Transferase</keyword>
<accession>B8IN64</accession>
<protein>
    <recommendedName>
        <fullName evidence="1">UDP-N-acetylglucosamine--N-acetylmuramyl-(pentapeptide) pyrophosphoryl-undecaprenol N-acetylglucosamine transferase</fullName>
        <ecNumber evidence="1">2.4.1.227</ecNumber>
    </recommendedName>
    <alternativeName>
        <fullName evidence="1">Undecaprenyl-PP-MurNAc-pentapeptide-UDPGlcNAc GlcNAc transferase</fullName>
    </alternativeName>
</protein>
<feature type="chain" id="PRO_1000192136" description="UDP-N-acetylglucosamine--N-acetylmuramyl-(pentapeptide) pyrophosphoryl-undecaprenol N-acetylglucosamine transferase">
    <location>
        <begin position="1"/>
        <end position="373"/>
    </location>
</feature>
<feature type="binding site" evidence="1">
    <location>
        <begin position="15"/>
        <end position="17"/>
    </location>
    <ligand>
        <name>UDP-N-acetyl-alpha-D-glucosamine</name>
        <dbReference type="ChEBI" id="CHEBI:57705"/>
    </ligand>
</feature>
<feature type="binding site" evidence="1">
    <location>
        <position position="126"/>
    </location>
    <ligand>
        <name>UDP-N-acetyl-alpha-D-glucosamine</name>
        <dbReference type="ChEBI" id="CHEBI:57705"/>
    </ligand>
</feature>
<feature type="binding site" evidence="1">
    <location>
        <position position="170"/>
    </location>
    <ligand>
        <name>UDP-N-acetyl-alpha-D-glucosamine</name>
        <dbReference type="ChEBI" id="CHEBI:57705"/>
    </ligand>
</feature>
<feature type="binding site" evidence="1">
    <location>
        <position position="198"/>
    </location>
    <ligand>
        <name>UDP-N-acetyl-alpha-D-glucosamine</name>
        <dbReference type="ChEBI" id="CHEBI:57705"/>
    </ligand>
</feature>
<feature type="binding site" evidence="1">
    <location>
        <position position="300"/>
    </location>
    <ligand>
        <name>UDP-N-acetyl-alpha-D-glucosamine</name>
        <dbReference type="ChEBI" id="CHEBI:57705"/>
    </ligand>
</feature>
<name>MURG_METNO</name>
<evidence type="ECO:0000255" key="1">
    <source>
        <dbReference type="HAMAP-Rule" id="MF_00033"/>
    </source>
</evidence>
<organism>
    <name type="scientific">Methylobacterium nodulans (strain LMG 21967 / CNCM I-2342 / ORS 2060)</name>
    <dbReference type="NCBI Taxonomy" id="460265"/>
    <lineage>
        <taxon>Bacteria</taxon>
        <taxon>Pseudomonadati</taxon>
        <taxon>Pseudomonadota</taxon>
        <taxon>Alphaproteobacteria</taxon>
        <taxon>Hyphomicrobiales</taxon>
        <taxon>Methylobacteriaceae</taxon>
        <taxon>Methylobacterium</taxon>
    </lineage>
</organism>
<comment type="function">
    <text evidence="1">Cell wall formation. Catalyzes the transfer of a GlcNAc subunit on undecaprenyl-pyrophosphoryl-MurNAc-pentapeptide (lipid intermediate I) to form undecaprenyl-pyrophosphoryl-MurNAc-(pentapeptide)GlcNAc (lipid intermediate II).</text>
</comment>
<comment type="catalytic activity">
    <reaction evidence="1">
        <text>di-trans,octa-cis-undecaprenyl diphospho-N-acetyl-alpha-D-muramoyl-L-alanyl-D-glutamyl-meso-2,6-diaminopimeloyl-D-alanyl-D-alanine + UDP-N-acetyl-alpha-D-glucosamine = di-trans,octa-cis-undecaprenyl diphospho-[N-acetyl-alpha-D-glucosaminyl-(1-&gt;4)]-N-acetyl-alpha-D-muramoyl-L-alanyl-D-glutamyl-meso-2,6-diaminopimeloyl-D-alanyl-D-alanine + UDP + H(+)</text>
        <dbReference type="Rhea" id="RHEA:31227"/>
        <dbReference type="ChEBI" id="CHEBI:15378"/>
        <dbReference type="ChEBI" id="CHEBI:57705"/>
        <dbReference type="ChEBI" id="CHEBI:58223"/>
        <dbReference type="ChEBI" id="CHEBI:61387"/>
        <dbReference type="ChEBI" id="CHEBI:61388"/>
        <dbReference type="EC" id="2.4.1.227"/>
    </reaction>
</comment>
<comment type="pathway">
    <text evidence="1">Cell wall biogenesis; peptidoglycan biosynthesis.</text>
</comment>
<comment type="subcellular location">
    <subcellularLocation>
        <location evidence="1">Cell inner membrane</location>
        <topology evidence="1">Peripheral membrane protein</topology>
        <orientation evidence="1">Cytoplasmic side</orientation>
    </subcellularLocation>
</comment>
<comment type="similarity">
    <text evidence="1">Belongs to the glycosyltransferase 28 family. MurG subfamily.</text>
</comment>
<proteinExistence type="inferred from homology"/>
<reference key="1">
    <citation type="submission" date="2009-01" db="EMBL/GenBank/DDBJ databases">
        <title>Complete sequence of chromosome of Methylobacterium nodulans ORS 2060.</title>
        <authorList>
            <consortium name="US DOE Joint Genome Institute"/>
            <person name="Lucas S."/>
            <person name="Copeland A."/>
            <person name="Lapidus A."/>
            <person name="Glavina del Rio T."/>
            <person name="Dalin E."/>
            <person name="Tice H."/>
            <person name="Bruce D."/>
            <person name="Goodwin L."/>
            <person name="Pitluck S."/>
            <person name="Sims D."/>
            <person name="Brettin T."/>
            <person name="Detter J.C."/>
            <person name="Han C."/>
            <person name="Larimer F."/>
            <person name="Land M."/>
            <person name="Hauser L."/>
            <person name="Kyrpides N."/>
            <person name="Ivanova N."/>
            <person name="Marx C.J."/>
            <person name="Richardson P."/>
        </authorList>
    </citation>
    <scope>NUCLEOTIDE SEQUENCE [LARGE SCALE GENOMIC DNA]</scope>
    <source>
        <strain>LMG 21967 / CNCM I-2342 / ORS 2060</strain>
    </source>
</reference>